<reference key="1">
    <citation type="journal article" date="2007" name="Proc. Natl. Acad. Sci. U.S.A.">
        <title>Genomic and metabolic adaptations of Methanobrevibacter smithii to the human gut.</title>
        <authorList>
            <person name="Samuel B.S."/>
            <person name="Hansen E.E."/>
            <person name="Manchester J.K."/>
            <person name="Coutinho P.M."/>
            <person name="Henrissat B."/>
            <person name="Fulton R."/>
            <person name="Latreille P."/>
            <person name="Kim K."/>
            <person name="Wilson R.K."/>
            <person name="Gordon J.I."/>
        </authorList>
    </citation>
    <scope>NUCLEOTIDE SEQUENCE [LARGE SCALE GENOMIC DNA]</scope>
    <source>
        <strain>ATCC 35061 / DSM 861 / OCM 144 / PS</strain>
    </source>
</reference>
<gene>
    <name evidence="1" type="primary">nop10</name>
    <name type="ordered locus">Msm_1132</name>
</gene>
<evidence type="ECO:0000255" key="1">
    <source>
        <dbReference type="HAMAP-Rule" id="MF_00803"/>
    </source>
</evidence>
<proteinExistence type="inferred from homology"/>
<sequence length="58" mass="6839">MNMKMNKCPDCKIYTMEDACPQCGGELKVIYPPKFSIEDKYGKYRRILKKEAMNKKDD</sequence>
<keyword id="KW-0687">Ribonucleoprotein</keyword>
<keyword id="KW-0690">Ribosome biogenesis</keyword>
<keyword id="KW-0698">rRNA processing</keyword>
<accession>A5UMA9</accession>
<dbReference type="EMBL" id="CP000678">
    <property type="protein sequence ID" value="ABQ87337.1"/>
    <property type="molecule type" value="Genomic_DNA"/>
</dbReference>
<dbReference type="RefSeq" id="WP_004035922.1">
    <property type="nucleotide sequence ID" value="NZ_CP117965.1"/>
</dbReference>
<dbReference type="SMR" id="A5UMA9"/>
<dbReference type="STRING" id="420247.Msm_1132"/>
<dbReference type="EnsemblBacteria" id="ABQ87337">
    <property type="protein sequence ID" value="ABQ87337"/>
    <property type="gene ID" value="Msm_1132"/>
</dbReference>
<dbReference type="KEGG" id="msi:Msm_1132"/>
<dbReference type="PATRIC" id="fig|420247.28.peg.1131"/>
<dbReference type="eggNOG" id="arCOG00906">
    <property type="taxonomic scope" value="Archaea"/>
</dbReference>
<dbReference type="HOGENOM" id="CLU_196480_1_0_2"/>
<dbReference type="Proteomes" id="UP000001992">
    <property type="component" value="Chromosome"/>
</dbReference>
<dbReference type="GO" id="GO:1990904">
    <property type="term" value="C:ribonucleoprotein complex"/>
    <property type="evidence" value="ECO:0007669"/>
    <property type="project" value="UniProtKB-KW"/>
</dbReference>
<dbReference type="GO" id="GO:0030515">
    <property type="term" value="F:snoRNA binding"/>
    <property type="evidence" value="ECO:0007669"/>
    <property type="project" value="InterPro"/>
</dbReference>
<dbReference type="GO" id="GO:0001522">
    <property type="term" value="P:pseudouridine synthesis"/>
    <property type="evidence" value="ECO:0007669"/>
    <property type="project" value="InterPro"/>
</dbReference>
<dbReference type="GO" id="GO:0006364">
    <property type="term" value="P:rRNA processing"/>
    <property type="evidence" value="ECO:0007669"/>
    <property type="project" value="UniProtKB-UniRule"/>
</dbReference>
<dbReference type="Gene3D" id="2.20.28.40">
    <property type="entry name" value="H/ACA ribonucleoprotein complex, subunit Nop10"/>
    <property type="match status" value="1"/>
</dbReference>
<dbReference type="HAMAP" id="MF_00803">
    <property type="entry name" value="Nop10"/>
    <property type="match status" value="1"/>
</dbReference>
<dbReference type="InterPro" id="IPR007264">
    <property type="entry name" value="H/ACA_rnp_Nop10"/>
</dbReference>
<dbReference type="InterPro" id="IPR036756">
    <property type="entry name" value="H/ACA_rnp_Nop10_sf"/>
</dbReference>
<dbReference type="InterPro" id="IPR023532">
    <property type="entry name" value="Nop10_arc-typ"/>
</dbReference>
<dbReference type="NCBIfam" id="NF009623">
    <property type="entry name" value="PRK13130.1"/>
    <property type="match status" value="1"/>
</dbReference>
<dbReference type="Pfam" id="PF04135">
    <property type="entry name" value="Nop10p"/>
    <property type="match status" value="1"/>
</dbReference>
<dbReference type="SUPFAM" id="SSF144210">
    <property type="entry name" value="Nop10-like SnoRNP"/>
    <property type="match status" value="1"/>
</dbReference>
<name>NOP10_METS3</name>
<protein>
    <recommendedName>
        <fullName evidence="1">Ribosome biogenesis protein Nop10</fullName>
    </recommendedName>
</protein>
<comment type="function">
    <text evidence="1">Involved in ribosome biogenesis; more specifically in 18S rRNA pseudouridylation and in cleavage of pre-rRNA.</text>
</comment>
<comment type="similarity">
    <text evidence="1">Belongs to the NOP10 family.</text>
</comment>
<feature type="chain" id="PRO_1000083704" description="Ribosome biogenesis protein Nop10">
    <location>
        <begin position="1"/>
        <end position="58"/>
    </location>
</feature>
<organism>
    <name type="scientific">Methanobrevibacter smithii (strain ATCC 35061 / DSM 861 / OCM 144 / PS)</name>
    <dbReference type="NCBI Taxonomy" id="420247"/>
    <lineage>
        <taxon>Archaea</taxon>
        <taxon>Methanobacteriati</taxon>
        <taxon>Methanobacteriota</taxon>
        <taxon>Methanomada group</taxon>
        <taxon>Methanobacteria</taxon>
        <taxon>Methanobacteriales</taxon>
        <taxon>Methanobacteriaceae</taxon>
        <taxon>Methanobrevibacter</taxon>
    </lineage>
</organism>